<dbReference type="EC" id="6.3.3.1" evidence="1"/>
<dbReference type="EMBL" id="FM209186">
    <property type="protein sequence ID" value="CAW29125.1"/>
    <property type="molecule type" value="Genomic_DNA"/>
</dbReference>
<dbReference type="RefSeq" id="WP_003109942.1">
    <property type="nucleotide sequence ID" value="NC_011770.1"/>
</dbReference>
<dbReference type="SMR" id="B7UXY9"/>
<dbReference type="KEGG" id="pag:PLES_43701"/>
<dbReference type="HOGENOM" id="CLU_047116_0_0_6"/>
<dbReference type="UniPathway" id="UPA00074">
    <property type="reaction ID" value="UER00129"/>
</dbReference>
<dbReference type="GO" id="GO:0005829">
    <property type="term" value="C:cytosol"/>
    <property type="evidence" value="ECO:0007669"/>
    <property type="project" value="TreeGrafter"/>
</dbReference>
<dbReference type="GO" id="GO:0005524">
    <property type="term" value="F:ATP binding"/>
    <property type="evidence" value="ECO:0007669"/>
    <property type="project" value="UniProtKB-KW"/>
</dbReference>
<dbReference type="GO" id="GO:0004637">
    <property type="term" value="F:phosphoribosylamine-glycine ligase activity"/>
    <property type="evidence" value="ECO:0007669"/>
    <property type="project" value="TreeGrafter"/>
</dbReference>
<dbReference type="GO" id="GO:0004641">
    <property type="term" value="F:phosphoribosylformylglycinamidine cyclo-ligase activity"/>
    <property type="evidence" value="ECO:0007669"/>
    <property type="project" value="UniProtKB-UniRule"/>
</dbReference>
<dbReference type="GO" id="GO:0006189">
    <property type="term" value="P:'de novo' IMP biosynthetic process"/>
    <property type="evidence" value="ECO:0007669"/>
    <property type="project" value="UniProtKB-UniRule"/>
</dbReference>
<dbReference type="GO" id="GO:0046084">
    <property type="term" value="P:adenine biosynthetic process"/>
    <property type="evidence" value="ECO:0007669"/>
    <property type="project" value="TreeGrafter"/>
</dbReference>
<dbReference type="CDD" id="cd02196">
    <property type="entry name" value="PurM"/>
    <property type="match status" value="1"/>
</dbReference>
<dbReference type="FunFam" id="3.30.1330.10:FF:000001">
    <property type="entry name" value="Phosphoribosylformylglycinamidine cyclo-ligase"/>
    <property type="match status" value="1"/>
</dbReference>
<dbReference type="FunFam" id="3.90.650.10:FF:000001">
    <property type="entry name" value="Phosphoribosylformylglycinamidine cyclo-ligase"/>
    <property type="match status" value="1"/>
</dbReference>
<dbReference type="Gene3D" id="3.90.650.10">
    <property type="entry name" value="PurM-like C-terminal domain"/>
    <property type="match status" value="1"/>
</dbReference>
<dbReference type="Gene3D" id="3.30.1330.10">
    <property type="entry name" value="PurM-like, N-terminal domain"/>
    <property type="match status" value="1"/>
</dbReference>
<dbReference type="HAMAP" id="MF_00741">
    <property type="entry name" value="AIRS"/>
    <property type="match status" value="1"/>
</dbReference>
<dbReference type="InterPro" id="IPR010918">
    <property type="entry name" value="PurM-like_C_dom"/>
</dbReference>
<dbReference type="InterPro" id="IPR036676">
    <property type="entry name" value="PurM-like_C_sf"/>
</dbReference>
<dbReference type="InterPro" id="IPR016188">
    <property type="entry name" value="PurM-like_N"/>
</dbReference>
<dbReference type="InterPro" id="IPR036921">
    <property type="entry name" value="PurM-like_N_sf"/>
</dbReference>
<dbReference type="InterPro" id="IPR004733">
    <property type="entry name" value="PurM_cligase"/>
</dbReference>
<dbReference type="NCBIfam" id="TIGR00878">
    <property type="entry name" value="purM"/>
    <property type="match status" value="1"/>
</dbReference>
<dbReference type="PANTHER" id="PTHR10520:SF12">
    <property type="entry name" value="TRIFUNCTIONAL PURINE BIOSYNTHETIC PROTEIN ADENOSINE-3"/>
    <property type="match status" value="1"/>
</dbReference>
<dbReference type="PANTHER" id="PTHR10520">
    <property type="entry name" value="TRIFUNCTIONAL PURINE BIOSYNTHETIC PROTEIN ADENOSINE-3-RELATED"/>
    <property type="match status" value="1"/>
</dbReference>
<dbReference type="Pfam" id="PF00586">
    <property type="entry name" value="AIRS"/>
    <property type="match status" value="1"/>
</dbReference>
<dbReference type="Pfam" id="PF02769">
    <property type="entry name" value="AIRS_C"/>
    <property type="match status" value="1"/>
</dbReference>
<dbReference type="SUPFAM" id="SSF56042">
    <property type="entry name" value="PurM C-terminal domain-like"/>
    <property type="match status" value="1"/>
</dbReference>
<dbReference type="SUPFAM" id="SSF55326">
    <property type="entry name" value="PurM N-terminal domain-like"/>
    <property type="match status" value="1"/>
</dbReference>
<organism>
    <name type="scientific">Pseudomonas aeruginosa (strain LESB58)</name>
    <dbReference type="NCBI Taxonomy" id="557722"/>
    <lineage>
        <taxon>Bacteria</taxon>
        <taxon>Pseudomonadati</taxon>
        <taxon>Pseudomonadota</taxon>
        <taxon>Gammaproteobacteria</taxon>
        <taxon>Pseudomonadales</taxon>
        <taxon>Pseudomonadaceae</taxon>
        <taxon>Pseudomonas</taxon>
    </lineage>
</organism>
<keyword id="KW-0067">ATP-binding</keyword>
<keyword id="KW-0963">Cytoplasm</keyword>
<keyword id="KW-0436">Ligase</keyword>
<keyword id="KW-0547">Nucleotide-binding</keyword>
<keyword id="KW-0658">Purine biosynthesis</keyword>
<reference key="1">
    <citation type="journal article" date="2009" name="Genome Res.">
        <title>Newly introduced genomic prophage islands are critical determinants of in vivo competitiveness in the Liverpool epidemic strain of Pseudomonas aeruginosa.</title>
        <authorList>
            <person name="Winstanley C."/>
            <person name="Langille M.G.I."/>
            <person name="Fothergill J.L."/>
            <person name="Kukavica-Ibrulj I."/>
            <person name="Paradis-Bleau C."/>
            <person name="Sanschagrin F."/>
            <person name="Thomson N.R."/>
            <person name="Winsor G.L."/>
            <person name="Quail M.A."/>
            <person name="Lennard N."/>
            <person name="Bignell A."/>
            <person name="Clarke L."/>
            <person name="Seeger K."/>
            <person name="Saunders D."/>
            <person name="Harris D."/>
            <person name="Parkhill J."/>
            <person name="Hancock R.E.W."/>
            <person name="Brinkman F.S.L."/>
            <person name="Levesque R.C."/>
        </authorList>
    </citation>
    <scope>NUCLEOTIDE SEQUENCE [LARGE SCALE GENOMIC DNA]</scope>
    <source>
        <strain>LESB58</strain>
    </source>
</reference>
<evidence type="ECO:0000255" key="1">
    <source>
        <dbReference type="HAMAP-Rule" id="MF_00741"/>
    </source>
</evidence>
<gene>
    <name evidence="1" type="primary">purM</name>
    <name type="ordered locus">PLES_43701</name>
</gene>
<feature type="chain" id="PRO_1000193035" description="Phosphoribosylformylglycinamidine cyclo-ligase">
    <location>
        <begin position="1"/>
        <end position="353"/>
    </location>
</feature>
<sequence length="353" mass="37181">MSSKQPSLSYKDAGVDIDAGEALVERIKGVAKRTARPEVMGGLGGFGALCEIPAGYKQPVLVSGTDGVGTKLRLALNLNKHDSIGQDLVAMCVNDLVVCGAEPLFFLDYYATGKLNVDVAATVVTGIGAGCELAGCSLVGGETAEMPGMYEGEDYDLAGFCVGVVEKAEIIDGSRVQAGDALIALPSSGPHSNGYSLIRKIIEVSGADIEQVQLDGKPLADLLMAPTRIYVKPLLQLIKQTGAVKAMAHITGGGLLDNIPRVLPDNAQAVIDVASWNRPAVFDWLQEQGNVDETEMHRVLNCGVGMVICVAQSDAEKALEVLRAAGEQPWQIGRIETCGADAERVVLNNLKNH</sequence>
<accession>B7UXY9</accession>
<protein>
    <recommendedName>
        <fullName evidence="1">Phosphoribosylformylglycinamidine cyclo-ligase</fullName>
        <ecNumber evidence="1">6.3.3.1</ecNumber>
    </recommendedName>
    <alternativeName>
        <fullName evidence="1">AIR synthase</fullName>
    </alternativeName>
    <alternativeName>
        <fullName evidence="1">AIRS</fullName>
    </alternativeName>
    <alternativeName>
        <fullName evidence="1">Phosphoribosyl-aminoimidazole synthetase</fullName>
    </alternativeName>
</protein>
<comment type="catalytic activity">
    <reaction evidence="1">
        <text>2-formamido-N(1)-(5-O-phospho-beta-D-ribosyl)acetamidine + ATP = 5-amino-1-(5-phospho-beta-D-ribosyl)imidazole + ADP + phosphate + H(+)</text>
        <dbReference type="Rhea" id="RHEA:23032"/>
        <dbReference type="ChEBI" id="CHEBI:15378"/>
        <dbReference type="ChEBI" id="CHEBI:30616"/>
        <dbReference type="ChEBI" id="CHEBI:43474"/>
        <dbReference type="ChEBI" id="CHEBI:137981"/>
        <dbReference type="ChEBI" id="CHEBI:147287"/>
        <dbReference type="ChEBI" id="CHEBI:456216"/>
        <dbReference type="EC" id="6.3.3.1"/>
    </reaction>
</comment>
<comment type="pathway">
    <text evidence="1">Purine metabolism; IMP biosynthesis via de novo pathway; 5-amino-1-(5-phospho-D-ribosyl)imidazole from N(2)-formyl-N(1)-(5-phospho-D-ribosyl)glycinamide: step 2/2.</text>
</comment>
<comment type="subcellular location">
    <subcellularLocation>
        <location evidence="1">Cytoplasm</location>
    </subcellularLocation>
</comment>
<comment type="similarity">
    <text evidence="1">Belongs to the AIR synthase family.</text>
</comment>
<name>PUR5_PSEA8</name>
<proteinExistence type="inferred from homology"/>